<protein>
    <recommendedName>
        <fullName evidence="1">Large ribosomal subunit protein bL31</fullName>
    </recommendedName>
    <alternativeName>
        <fullName evidence="2">50S ribosomal protein L31</fullName>
    </alternativeName>
</protein>
<dbReference type="EMBL" id="FM180568">
    <property type="protein sequence ID" value="CAS11788.1"/>
    <property type="molecule type" value="Genomic_DNA"/>
</dbReference>
<dbReference type="RefSeq" id="WP_000710769.1">
    <property type="nucleotide sequence ID" value="NC_011601.1"/>
</dbReference>
<dbReference type="SMR" id="B7UNQ6"/>
<dbReference type="GeneID" id="93777962"/>
<dbReference type="KEGG" id="ecg:E2348C_4240"/>
<dbReference type="HOGENOM" id="CLU_114306_4_3_6"/>
<dbReference type="Proteomes" id="UP000008205">
    <property type="component" value="Chromosome"/>
</dbReference>
<dbReference type="GO" id="GO:1990904">
    <property type="term" value="C:ribonucleoprotein complex"/>
    <property type="evidence" value="ECO:0007669"/>
    <property type="project" value="UniProtKB-KW"/>
</dbReference>
<dbReference type="GO" id="GO:0005840">
    <property type="term" value="C:ribosome"/>
    <property type="evidence" value="ECO:0007669"/>
    <property type="project" value="UniProtKB-KW"/>
</dbReference>
<dbReference type="GO" id="GO:0046872">
    <property type="term" value="F:metal ion binding"/>
    <property type="evidence" value="ECO:0007669"/>
    <property type="project" value="UniProtKB-KW"/>
</dbReference>
<dbReference type="GO" id="GO:0019843">
    <property type="term" value="F:rRNA binding"/>
    <property type="evidence" value="ECO:0007669"/>
    <property type="project" value="UniProtKB-KW"/>
</dbReference>
<dbReference type="GO" id="GO:0003735">
    <property type="term" value="F:structural constituent of ribosome"/>
    <property type="evidence" value="ECO:0007669"/>
    <property type="project" value="InterPro"/>
</dbReference>
<dbReference type="GO" id="GO:0006412">
    <property type="term" value="P:translation"/>
    <property type="evidence" value="ECO:0007669"/>
    <property type="project" value="UniProtKB-UniRule"/>
</dbReference>
<dbReference type="FunFam" id="4.10.830.30:FF:000001">
    <property type="entry name" value="50S ribosomal protein L31"/>
    <property type="match status" value="1"/>
</dbReference>
<dbReference type="Gene3D" id="4.10.830.30">
    <property type="entry name" value="Ribosomal protein L31"/>
    <property type="match status" value="1"/>
</dbReference>
<dbReference type="HAMAP" id="MF_00501">
    <property type="entry name" value="Ribosomal_bL31_1"/>
    <property type="match status" value="1"/>
</dbReference>
<dbReference type="InterPro" id="IPR034704">
    <property type="entry name" value="Ribosomal_bL28/bL31-like_sf"/>
</dbReference>
<dbReference type="InterPro" id="IPR002150">
    <property type="entry name" value="Ribosomal_bL31"/>
</dbReference>
<dbReference type="InterPro" id="IPR027491">
    <property type="entry name" value="Ribosomal_bL31_A"/>
</dbReference>
<dbReference type="InterPro" id="IPR042105">
    <property type="entry name" value="Ribosomal_bL31_sf"/>
</dbReference>
<dbReference type="NCBIfam" id="TIGR00105">
    <property type="entry name" value="L31"/>
    <property type="match status" value="1"/>
</dbReference>
<dbReference type="NCBIfam" id="NF000612">
    <property type="entry name" value="PRK00019.1"/>
    <property type="match status" value="1"/>
</dbReference>
<dbReference type="NCBIfam" id="NF001809">
    <property type="entry name" value="PRK00528.1"/>
    <property type="match status" value="1"/>
</dbReference>
<dbReference type="PANTHER" id="PTHR33280">
    <property type="entry name" value="50S RIBOSOMAL PROTEIN L31, CHLOROPLASTIC"/>
    <property type="match status" value="1"/>
</dbReference>
<dbReference type="PANTHER" id="PTHR33280:SF6">
    <property type="entry name" value="LARGE RIBOSOMAL SUBUNIT PROTEIN BL31A"/>
    <property type="match status" value="1"/>
</dbReference>
<dbReference type="Pfam" id="PF01197">
    <property type="entry name" value="Ribosomal_L31"/>
    <property type="match status" value="1"/>
</dbReference>
<dbReference type="PRINTS" id="PR01249">
    <property type="entry name" value="RIBOSOMALL31"/>
</dbReference>
<dbReference type="SUPFAM" id="SSF143800">
    <property type="entry name" value="L28p-like"/>
    <property type="match status" value="1"/>
</dbReference>
<dbReference type="PROSITE" id="PS01143">
    <property type="entry name" value="RIBOSOMAL_L31"/>
    <property type="match status" value="1"/>
</dbReference>
<sequence length="70" mass="7871">MKKDIHPKYEEITASCSCGNVMKIRSTVGHDLNLDVCSKCHPFFTGKQRDVATGGRVDRFNKRFNIPGSK</sequence>
<reference key="1">
    <citation type="journal article" date="2009" name="J. Bacteriol.">
        <title>Complete genome sequence and comparative genome analysis of enteropathogenic Escherichia coli O127:H6 strain E2348/69.</title>
        <authorList>
            <person name="Iguchi A."/>
            <person name="Thomson N.R."/>
            <person name="Ogura Y."/>
            <person name="Saunders D."/>
            <person name="Ooka T."/>
            <person name="Henderson I.R."/>
            <person name="Harris D."/>
            <person name="Asadulghani M."/>
            <person name="Kurokawa K."/>
            <person name="Dean P."/>
            <person name="Kenny B."/>
            <person name="Quail M.A."/>
            <person name="Thurston S."/>
            <person name="Dougan G."/>
            <person name="Hayashi T."/>
            <person name="Parkhill J."/>
            <person name="Frankel G."/>
        </authorList>
    </citation>
    <scope>NUCLEOTIDE SEQUENCE [LARGE SCALE GENOMIC DNA]</scope>
    <source>
        <strain>E2348/69 / EPEC</strain>
    </source>
</reference>
<keyword id="KW-0007">Acetylation</keyword>
<keyword id="KW-0479">Metal-binding</keyword>
<keyword id="KW-1185">Reference proteome</keyword>
<keyword id="KW-0687">Ribonucleoprotein</keyword>
<keyword id="KW-0689">Ribosomal protein</keyword>
<keyword id="KW-0694">RNA-binding</keyword>
<keyword id="KW-0699">rRNA-binding</keyword>
<keyword id="KW-0862">Zinc</keyword>
<accession>B7UNQ6</accession>
<proteinExistence type="inferred from homology"/>
<gene>
    <name evidence="1" type="primary">rpmE</name>
    <name type="ordered locus">E2348C_4240</name>
</gene>
<evidence type="ECO:0000255" key="1">
    <source>
        <dbReference type="HAMAP-Rule" id="MF_00501"/>
    </source>
</evidence>
<evidence type="ECO:0000305" key="2"/>
<organism>
    <name type="scientific">Escherichia coli O127:H6 (strain E2348/69 / EPEC)</name>
    <dbReference type="NCBI Taxonomy" id="574521"/>
    <lineage>
        <taxon>Bacteria</taxon>
        <taxon>Pseudomonadati</taxon>
        <taxon>Pseudomonadota</taxon>
        <taxon>Gammaproteobacteria</taxon>
        <taxon>Enterobacterales</taxon>
        <taxon>Enterobacteriaceae</taxon>
        <taxon>Escherichia</taxon>
    </lineage>
</organism>
<name>RL31_ECO27</name>
<comment type="function">
    <text evidence="1">Binds the 23S rRNA.</text>
</comment>
<comment type="cofactor">
    <cofactor evidence="1">
        <name>Zn(2+)</name>
        <dbReference type="ChEBI" id="CHEBI:29105"/>
    </cofactor>
    <text evidence="1">Binds 1 zinc ion per subunit.</text>
</comment>
<comment type="subunit">
    <text evidence="1">Part of the 50S ribosomal subunit.</text>
</comment>
<comment type="similarity">
    <text evidence="1">Belongs to the bacterial ribosomal protein bL31 family. Type A subfamily.</text>
</comment>
<feature type="chain" id="PRO_1000176960" description="Large ribosomal subunit protein bL31">
    <location>
        <begin position="1"/>
        <end position="70"/>
    </location>
</feature>
<feature type="binding site" evidence="1">
    <location>
        <position position="16"/>
    </location>
    <ligand>
        <name>Zn(2+)</name>
        <dbReference type="ChEBI" id="CHEBI:29105"/>
    </ligand>
</feature>
<feature type="binding site" evidence="1">
    <location>
        <position position="18"/>
    </location>
    <ligand>
        <name>Zn(2+)</name>
        <dbReference type="ChEBI" id="CHEBI:29105"/>
    </ligand>
</feature>
<feature type="binding site" evidence="1">
    <location>
        <position position="37"/>
    </location>
    <ligand>
        <name>Zn(2+)</name>
        <dbReference type="ChEBI" id="CHEBI:29105"/>
    </ligand>
</feature>
<feature type="binding site" evidence="1">
    <location>
        <position position="40"/>
    </location>
    <ligand>
        <name>Zn(2+)</name>
        <dbReference type="ChEBI" id="CHEBI:29105"/>
    </ligand>
</feature>
<feature type="modified residue" description="N6-acetyllysine" evidence="1">
    <location>
        <position position="8"/>
    </location>
</feature>